<evidence type="ECO:0000250" key="1"/>
<evidence type="ECO:0000250" key="2">
    <source>
        <dbReference type="UniProtKB" id="P01339"/>
    </source>
</evidence>
<evidence type="ECO:0000255" key="3"/>
<evidence type="ECO:0000269" key="4">
    <source ref="1"/>
</evidence>
<evidence type="ECO:0000303" key="5">
    <source ref="1"/>
</evidence>
<evidence type="ECO:0000305" key="6"/>
<protein>
    <recommendedName>
        <fullName evidence="5">Insulin-2</fullName>
    </recommendedName>
    <component>
        <recommendedName>
            <fullName evidence="5">Insulin-2 B chain</fullName>
        </recommendedName>
    </component>
    <component>
        <recommendedName>
            <fullName evidence="5">Insulin-2 A chain</fullName>
        </recommendedName>
    </component>
</protein>
<feature type="peptide" id="PRO_0000429396" description="Insulin-2 B chain" evidence="4">
    <location>
        <begin position="1"/>
        <end position="30"/>
    </location>
</feature>
<feature type="peptide" id="PRO_0000429397" description="Insulin-2 A chain" evidence="4">
    <location>
        <begin position="31"/>
        <end position="51"/>
    </location>
</feature>
<feature type="disulfide bond" description="Interchain (between B and A chains)" evidence="2">
    <location>
        <begin position="8"/>
        <end position="37"/>
    </location>
</feature>
<feature type="disulfide bond" description="Interchain (between B and A chains)" evidence="2">
    <location>
        <begin position="20"/>
        <end position="50"/>
    </location>
</feature>
<feature type="disulfide bond" evidence="2">
    <location>
        <begin position="36"/>
        <end position="41"/>
    </location>
</feature>
<feature type="non-consecutive residues" evidence="5">
    <location>
        <begin position="30"/>
        <end position="31"/>
    </location>
</feature>
<proteinExistence type="evidence at protein level"/>
<accession>C0HJI6</accession>
<sequence length="51" mass="5742">VAPPQHLCGSHLVDALYLVCGDRGFFYNPKGIVEQCCHKPCNIFDLQNYCN</sequence>
<dbReference type="SMR" id="C0HJI6"/>
<dbReference type="GO" id="GO:0005615">
    <property type="term" value="C:extracellular space"/>
    <property type="evidence" value="ECO:0007669"/>
    <property type="project" value="TreeGrafter"/>
</dbReference>
<dbReference type="GO" id="GO:0005179">
    <property type="term" value="F:hormone activity"/>
    <property type="evidence" value="ECO:0007669"/>
    <property type="project" value="UniProtKB-KW"/>
</dbReference>
<dbReference type="GO" id="GO:0006006">
    <property type="term" value="P:glucose metabolic process"/>
    <property type="evidence" value="ECO:0007669"/>
    <property type="project" value="UniProtKB-KW"/>
</dbReference>
<dbReference type="CDD" id="cd04367">
    <property type="entry name" value="IlGF_insulin_like"/>
    <property type="match status" value="1"/>
</dbReference>
<dbReference type="Gene3D" id="1.10.100.10">
    <property type="entry name" value="Insulin-like"/>
    <property type="match status" value="1"/>
</dbReference>
<dbReference type="InterPro" id="IPR004825">
    <property type="entry name" value="Insulin"/>
</dbReference>
<dbReference type="InterPro" id="IPR016179">
    <property type="entry name" value="Insulin-like"/>
</dbReference>
<dbReference type="InterPro" id="IPR036438">
    <property type="entry name" value="Insulin-like_sf"/>
</dbReference>
<dbReference type="InterPro" id="IPR022353">
    <property type="entry name" value="Insulin_CS"/>
</dbReference>
<dbReference type="InterPro" id="IPR022352">
    <property type="entry name" value="Insulin_family"/>
</dbReference>
<dbReference type="PANTHER" id="PTHR11454:SF9">
    <property type="entry name" value="INSULIN"/>
    <property type="match status" value="1"/>
</dbReference>
<dbReference type="PANTHER" id="PTHR11454">
    <property type="entry name" value="INSULIN/INSULIN GROWTH FACTOR"/>
    <property type="match status" value="1"/>
</dbReference>
<dbReference type="Pfam" id="PF00049">
    <property type="entry name" value="Insulin"/>
    <property type="match status" value="2"/>
</dbReference>
<dbReference type="PRINTS" id="PR00277">
    <property type="entry name" value="INSULIN"/>
</dbReference>
<dbReference type="PRINTS" id="PR00276">
    <property type="entry name" value="INSULINFAMLY"/>
</dbReference>
<dbReference type="SMART" id="SM00078">
    <property type="entry name" value="IlGF"/>
    <property type="match status" value="1"/>
</dbReference>
<dbReference type="SUPFAM" id="SSF56994">
    <property type="entry name" value="Insulin-like"/>
    <property type="match status" value="1"/>
</dbReference>
<dbReference type="PROSITE" id="PS00262">
    <property type="entry name" value="INSULIN"/>
    <property type="match status" value="1"/>
</dbReference>
<keyword id="KW-0119">Carbohydrate metabolism</keyword>
<keyword id="KW-0903">Direct protein sequencing</keyword>
<keyword id="KW-1015">Disulfide bond</keyword>
<keyword id="KW-0313">Glucose metabolism</keyword>
<keyword id="KW-0372">Hormone</keyword>
<keyword id="KW-0964">Secreted</keyword>
<organism>
    <name type="scientific">Thunnus orientalis</name>
    <name type="common">North Pacific bluefin tuna</name>
    <name type="synonym">Thunnus thynnus orientalis</name>
    <dbReference type="NCBI Taxonomy" id="8238"/>
    <lineage>
        <taxon>Eukaryota</taxon>
        <taxon>Metazoa</taxon>
        <taxon>Chordata</taxon>
        <taxon>Craniata</taxon>
        <taxon>Vertebrata</taxon>
        <taxon>Euteleostomi</taxon>
        <taxon>Actinopterygii</taxon>
        <taxon>Neopterygii</taxon>
        <taxon>Teleostei</taxon>
        <taxon>Neoteleostei</taxon>
        <taxon>Acanthomorphata</taxon>
        <taxon>Pelagiaria</taxon>
        <taxon>Scombriformes</taxon>
        <taxon>Scombridae</taxon>
        <taxon>Thunnus</taxon>
    </lineage>
</organism>
<name>INS2_THUOR</name>
<reference evidence="6" key="1">
    <citation type="submission" date="2014-04" db="UniProtKB">
        <title>Primary structures of two insulins from tuna.</title>
        <authorList>
            <person name="Andoh T."/>
        </authorList>
    </citation>
    <scope>PROTEIN SEQUENCE</scope>
</reference>
<comment type="function">
    <text evidence="1">Insulin decreases blood glucose concentration. It increases cell permeability to monosaccharides, amino acids and fatty acids. It accelerates glycolysis, the pentose phosphate cycle, and glycogen synthesis in liver (By similarity).</text>
</comment>
<comment type="subunit">
    <text evidence="1">Heterodimer of a B chain and an A chain linked by two disulfide bonds.</text>
</comment>
<comment type="subcellular location">
    <subcellularLocation>
        <location evidence="1">Secreted</location>
    </subcellularLocation>
</comment>
<comment type="similarity">
    <text evidence="3">Belongs to the insulin family.</text>
</comment>